<proteinExistence type="evidence at protein level"/>
<comment type="function">
    <text evidence="3 4 5 6 8 10 11 12 14 15 16">Component of the nuclear pore complex (NPC), a complex required for the trafficking across the nuclear envelope (PubMed:9152019). Functions as a scaffolding element in the nuclear phase of the NPC (PubMed:12027452, PubMed:15356261). Plays a role in chromosomal organization and gene expression regulation; stimulates transcription by promoting the formation of an open chromatin environment (PubMed:12027452, PubMed:20174442). Binds chromatin to nucleoporin-associated regions (NARs) that define transcriptionally active regions of the genome (PubMed:20174442). Associates with extended chromosomal regions that alternate between domains of high density binding with those of low occupancy (PubMed:20174442). Preferentially binds to NARs of the male X chromosome (PubMed:20174442). In males, together with Nup153, required for the localization of the male-specific lethal (MSL) histone acetyltransferase complex to the X chromosome and therefore for the transcription of dosage compensation genes (PubMed:16543150). In males, restrains dosage-compensated expression at the level of nascent transcription probably by interacting with the MSL complex and by modulating RNA Polymerase II phosphorylation status and activity (PubMed:34133927). During mitosis forms a gel-like spindle matrix complex together with Skeletor (Skel), Chro, east, and Asator embedding the microtubule spindle apparatus (PubMed:15356261, PubMed:15962301, PubMed:19273613, PubMed:22855526). During interphase localizes Mad1 to the nuclear pore complex and thereby might act as a scaffold to assemble the Mad1-C-Mad2 complex, a heterotetramer that catalyzes the structural conversion of open-Mad2 (O-Mad2) into closed-Mad2 (C-Mad2) which is essential for spindle-assembly checkpoint (SAC) (PubMed:31913420). During the metaphase-anaphase transition and before chromosome congression, is phosphorylated by Msp-1; this modification releases Mad1 from the nuclear pore complex and thereby promotes assembly of SAC ensuring a timely and effective recruitment of spindle checkpoint proteins like Mad1, Mad2 and Mps1 to unattached kinetochores (KT) (PubMed:22855526, PubMed:26714316, PubMed:31913420). In testes, has a role in stem cell asymmetric division and maintenance via regulation of mitotic spindle assembly checkpoint (SAC) complex (PubMed:26714316).</text>
</comment>
<comment type="subunit">
    <text evidence="3 4 5 6 8 9 11 13 14 15 16">Part of the nuclear pore complex (NPC) (PubMed:12027452, PubMed:22855526, PubMed:9152019). Associates with male-specific lethal (MSL) histone acetyltransferase complex (PubMed:16543150). Interacts with Mad2; the interaction is required for efficient recruitment of Mad2 to unattached kinetochore and occurs in a microtubule-independent manner (PubMed:19273613). Interacts with Mad1 (N-terminus) (PubMed:31913420). Interacts with Chro, east and Asator; the interaction is part of a macromolecular complex forming the spindle matrix during mitosis (PubMed:15356261, PubMed:15962301, PubMed:19890914). Interacts with Nup98 (PubMed:28366641). In males, interacts with histone acetyltransferase mof (PubMed:34133927).</text>
</comment>
<comment type="interaction">
    <interactant intactId="EBI-127250">
        <id>A1Z8P9</id>
    </interactant>
    <interactant intactId="EBI-109513">
        <id>Q86BS3</id>
        <label>Chro</label>
    </interactant>
    <organismsDiffer>false</organismsDiffer>
    <experiments>2</experiments>
</comment>
<comment type="interaction">
    <interactant intactId="EBI-127250">
        <id>A1Z8P9</id>
    </interactant>
    <interactant intactId="EBI-168948">
        <id>Q7KND8</id>
        <label>Mad1</label>
    </interactant>
    <organismsDiffer>false</organismsDiffer>
    <experiments>2</experiments>
</comment>
<comment type="subcellular location">
    <subcellularLocation>
        <location evidence="3 4 10 11">Nucleus</location>
    </subcellularLocation>
    <subcellularLocation>
        <location evidence="16">Nucleus matrix</location>
    </subcellularLocation>
    <subcellularLocation>
        <location evidence="4">Nucleus lamina</location>
    </subcellularLocation>
    <subcellularLocation>
        <location evidence="7 16">Nucleus envelope</location>
    </subcellularLocation>
    <subcellularLocation>
        <location evidence="6 11">Nucleus membrane</location>
        <topology evidence="19">Peripheral membrane protein</topology>
        <orientation evidence="3">Nucleoplasmic side</orientation>
    </subcellularLocation>
    <subcellularLocation>
        <location evidence="3 11 14 16">Nucleus</location>
        <location evidence="3 11 14 16">Nuclear pore complex</location>
    </subcellularLocation>
    <subcellularLocation>
        <location evidence="4 7 11">Cytoplasm</location>
        <location evidence="4 7 11">Cytoskeleton</location>
        <location evidence="4 7 11">Spindle</location>
    </subcellularLocation>
    <subcellularLocation>
        <location evidence="8">Chromosome</location>
        <location evidence="8">Centromere</location>
        <location evidence="8">Kinetochore</location>
    </subcellularLocation>
    <subcellularLocation>
        <location evidence="4">Midbody</location>
    </subcellularLocation>
    <text evidence="3 4 5 8 10 11">In interphase, localized to the nucleoplasmic side of the nuclear pore complex (NPC) core structure, forming a fibrous structure called the nuclear basket (PubMed:15356261). Enriched at the nuclear lamina and at intranuclear spaces surrounding the chromosomes and the nucleolus (PubMed:15356261, PubMed:15962301). Colocalized with hnRNPs and snRNPs at a single heat shock puff during heat shock (PubMed:12027452). Reorganized during mitosis in a viscous and dynamic nuclear-derived spindle matrix that embeds the microtubule spindle apparatus from pole to pole in a microtubule-independent manner (PubMed:15356261). In prometaphase, localized at the spindle (PubMed:15356261). Localized to spindle midbody at telophase (PubMed:15356261). Recruited to the reforming nuclear envelope in early G1 (PubMed:15356261). Colocalized with Skeletor (Skel), Chro and east at the spindle matrix (PubMed:15356261, PubMed:15962301, PubMed:19273613, PubMed:22855526). Colocalized with Mad2 at the spindle matrix and kinetochore (PubMed:19273613). Associated with chromatin (PubMed:20174442).</text>
</comment>
<comment type="tissue specificity">
    <text evidence="16">Expressed in salivary glands, fat body, tracheal tube, esophageal tube and anterior ejaculatory duct (at protein level).</text>
</comment>
<comment type="developmental stage">
    <text evidence="6 16">Expressed at all developmental stages (PubMed:9152019). Expressed in embryos (at protein level) (PubMed:16543150).</text>
</comment>
<comment type="domain">
    <text evidence="11">The N-terminal coiled-coil domain is required for both nuclear pore complex (NPC) and spindle matrix localization.</text>
</comment>
<comment type="domain">
    <text evidence="4">The C-terminal domain is required for interchromosomal localization during interphase (PubMed:15356261). The C-terminal domain is sufficient for localization to the nuclear lamina as well as for spindle localization (PubMed:15356261).</text>
</comment>
<comment type="PTM">
    <text evidence="14">Mps1-mediated phosphorylation disrupts interaction with Mad1 during mitosis.</text>
</comment>
<comment type="disruption phenotype">
    <text evidence="12 15">RNAi-mediated knockdown in the whole body or specifically in the germ line results in a decreased number of germinal stem cells (GSCs) in the testes (PubMed:26714316). RNAi-mediated in the testes results in mislocalization of microtubule-regulating protein Apc2 and shg/E-cadherin, defective centrosome orientation, mitotic spindle formation and chromosome segretation (PubMed:26714316). RNAi-mediated knockdown in male salivary glands increases male-specific gene expression on X chromosome and nuclear expression of roX1 and roX2, two long non-coding RNAs (lncRNAs) part of the males-specific lethal (MSL) complex (PubMed:34133927). Simultaneous RNAi-mediated knockdown of Mgtor with RNAi-mediated knockdown of mof or the lncRNAs roX1 or roX2 in male salivary glands results in a rescue of up-regulated X chromosome gene expression (PubMed:34133927).</text>
</comment>
<comment type="similarity">
    <text evidence="19">Belongs to the TPR family.</text>
</comment>
<protein>
    <recommendedName>
        <fullName>Nucleoprotein TPR</fullName>
    </recommendedName>
    <alternativeName>
        <fullName>Nuclear envelope antigen Bx34</fullName>
    </alternativeName>
    <alternativeName>
        <fullName evidence="17">Protein megator</fullName>
    </alternativeName>
</protein>
<keyword id="KW-0010">Activator</keyword>
<keyword id="KW-0131">Cell cycle</keyword>
<keyword id="KW-0132">Cell division</keyword>
<keyword id="KW-0137">Centromere</keyword>
<keyword id="KW-0156">Chromatin regulator</keyword>
<keyword id="KW-0158">Chromosome</keyword>
<keyword id="KW-0175">Coiled coil</keyword>
<keyword id="KW-0963">Cytoplasm</keyword>
<keyword id="KW-0206">Cytoskeleton</keyword>
<keyword id="KW-0238">DNA-binding</keyword>
<keyword id="KW-0995">Kinetochore</keyword>
<keyword id="KW-0472">Membrane</keyword>
<keyword id="KW-0498">Mitosis</keyword>
<keyword id="KW-0509">mRNA transport</keyword>
<keyword id="KW-0906">Nuclear pore complex</keyword>
<keyword id="KW-0539">Nucleus</keyword>
<keyword id="KW-0597">Phosphoprotein</keyword>
<keyword id="KW-0653">Protein transport</keyword>
<keyword id="KW-1185">Reference proteome</keyword>
<keyword id="KW-0804">Transcription</keyword>
<keyword id="KW-0805">Transcription regulation</keyword>
<keyword id="KW-0811">Translocation</keyword>
<keyword id="KW-0813">Transport</keyword>
<evidence type="ECO:0000255" key="1"/>
<evidence type="ECO:0000256" key="2">
    <source>
        <dbReference type="SAM" id="MobiDB-lite"/>
    </source>
</evidence>
<evidence type="ECO:0000269" key="3">
    <source>
    </source>
</evidence>
<evidence type="ECO:0000269" key="4">
    <source>
    </source>
</evidence>
<evidence type="ECO:0000269" key="5">
    <source>
    </source>
</evidence>
<evidence type="ECO:0000269" key="6">
    <source>
    </source>
</evidence>
<evidence type="ECO:0000269" key="7">
    <source>
    </source>
</evidence>
<evidence type="ECO:0000269" key="8">
    <source>
    </source>
</evidence>
<evidence type="ECO:0000269" key="9">
    <source>
    </source>
</evidence>
<evidence type="ECO:0000269" key="10">
    <source>
    </source>
</evidence>
<evidence type="ECO:0000269" key="11">
    <source>
    </source>
</evidence>
<evidence type="ECO:0000269" key="12">
    <source>
    </source>
</evidence>
<evidence type="ECO:0000269" key="13">
    <source>
    </source>
</evidence>
<evidence type="ECO:0000269" key="14">
    <source>
    </source>
</evidence>
<evidence type="ECO:0000269" key="15">
    <source>
    </source>
</evidence>
<evidence type="ECO:0000269" key="16">
    <source>
    </source>
</evidence>
<evidence type="ECO:0000303" key="17">
    <source>
    </source>
</evidence>
<evidence type="ECO:0000303" key="18">
    <source>
    </source>
</evidence>
<evidence type="ECO:0000305" key="19"/>
<evidence type="ECO:0000312" key="20">
    <source>
        <dbReference type="FlyBase" id="FBgn0013756"/>
    </source>
</evidence>
<evidence type="ECO:0000312" key="21">
    <source>
        <dbReference type="Proteomes" id="UP000000803"/>
    </source>
</evidence>
<organism evidence="21">
    <name type="scientific">Drosophila melanogaster</name>
    <name type="common">Fruit fly</name>
    <dbReference type="NCBI Taxonomy" id="7227"/>
    <lineage>
        <taxon>Eukaryota</taxon>
        <taxon>Metazoa</taxon>
        <taxon>Ecdysozoa</taxon>
        <taxon>Arthropoda</taxon>
        <taxon>Hexapoda</taxon>
        <taxon>Insecta</taxon>
        <taxon>Pterygota</taxon>
        <taxon>Neoptera</taxon>
        <taxon>Endopterygota</taxon>
        <taxon>Diptera</taxon>
        <taxon>Brachycera</taxon>
        <taxon>Muscomorpha</taxon>
        <taxon>Ephydroidea</taxon>
        <taxon>Drosophilidae</taxon>
        <taxon>Drosophila</taxon>
        <taxon>Sophophora</taxon>
    </lineage>
</organism>
<name>TPR_DROME</name>
<accession>A1Z8P9</accession>
<accession>O01385</accession>
<feature type="chain" id="PRO_0000422103" description="Nucleoprotein TPR">
    <location>
        <begin position="1"/>
        <end position="2346"/>
    </location>
</feature>
<feature type="region of interest" description="Disordered" evidence="2">
    <location>
        <begin position="622"/>
        <end position="649"/>
    </location>
</feature>
<feature type="region of interest" description="Interacts with Mad1" evidence="14">
    <location>
        <begin position="1187"/>
        <end position="1655"/>
    </location>
</feature>
<feature type="region of interest" description="Disordered" evidence="2">
    <location>
        <begin position="1621"/>
        <end position="1677"/>
    </location>
</feature>
<feature type="region of interest" description="Disordered" evidence="2">
    <location>
        <begin position="1695"/>
        <end position="1768"/>
    </location>
</feature>
<feature type="region of interest" description="Disordered" evidence="2">
    <location>
        <begin position="1821"/>
        <end position="2346"/>
    </location>
</feature>
<feature type="coiled-coil region" evidence="1">
    <location>
        <begin position="38"/>
        <end position="190"/>
    </location>
</feature>
<feature type="coiled-coil region" evidence="1">
    <location>
        <begin position="217"/>
        <end position="366"/>
    </location>
</feature>
<feature type="coiled-coil region" evidence="1">
    <location>
        <begin position="395"/>
        <end position="493"/>
    </location>
</feature>
<feature type="coiled-coil region" evidence="1">
    <location>
        <begin position="565"/>
        <end position="596"/>
    </location>
</feature>
<feature type="coiled-coil region" evidence="1">
    <location>
        <begin position="643"/>
        <end position="1158"/>
    </location>
</feature>
<feature type="coiled-coil region" evidence="1">
    <location>
        <begin position="1196"/>
        <end position="1247"/>
    </location>
</feature>
<feature type="coiled-coil region" evidence="1">
    <location>
        <begin position="1281"/>
        <end position="1536"/>
    </location>
</feature>
<feature type="coiled-coil region" evidence="1">
    <location>
        <begin position="1579"/>
        <end position="1627"/>
    </location>
</feature>
<feature type="compositionally biased region" description="Polar residues" evidence="2">
    <location>
        <begin position="629"/>
        <end position="642"/>
    </location>
</feature>
<feature type="compositionally biased region" description="Polar residues" evidence="2">
    <location>
        <begin position="1621"/>
        <end position="1649"/>
    </location>
</feature>
<feature type="compositionally biased region" description="Polar residues" evidence="2">
    <location>
        <begin position="1657"/>
        <end position="1667"/>
    </location>
</feature>
<feature type="compositionally biased region" description="Low complexity" evidence="2">
    <location>
        <begin position="1702"/>
        <end position="1722"/>
    </location>
</feature>
<feature type="compositionally biased region" description="Polar residues" evidence="2">
    <location>
        <begin position="1738"/>
        <end position="1747"/>
    </location>
</feature>
<feature type="compositionally biased region" description="Low complexity" evidence="2">
    <location>
        <begin position="1752"/>
        <end position="1761"/>
    </location>
</feature>
<feature type="compositionally biased region" description="Low complexity" evidence="2">
    <location>
        <begin position="1827"/>
        <end position="1878"/>
    </location>
</feature>
<feature type="compositionally biased region" description="Polar residues" evidence="2">
    <location>
        <begin position="1879"/>
        <end position="1891"/>
    </location>
</feature>
<feature type="compositionally biased region" description="Acidic residues" evidence="2">
    <location>
        <begin position="1953"/>
        <end position="2023"/>
    </location>
</feature>
<feature type="compositionally biased region" description="Polar residues" evidence="2">
    <location>
        <begin position="2028"/>
        <end position="2080"/>
    </location>
</feature>
<feature type="compositionally biased region" description="Low complexity" evidence="2">
    <location>
        <begin position="2082"/>
        <end position="2091"/>
    </location>
</feature>
<feature type="compositionally biased region" description="Polar residues" evidence="2">
    <location>
        <begin position="2097"/>
        <end position="2110"/>
    </location>
</feature>
<feature type="compositionally biased region" description="Polar residues" evidence="2">
    <location>
        <begin position="2142"/>
        <end position="2159"/>
    </location>
</feature>
<feature type="compositionally biased region" description="Basic and acidic residues" evidence="2">
    <location>
        <begin position="2165"/>
        <end position="2184"/>
    </location>
</feature>
<feature type="compositionally biased region" description="Polar residues" evidence="2">
    <location>
        <begin position="2193"/>
        <end position="2223"/>
    </location>
</feature>
<feature type="compositionally biased region" description="Polar residues" evidence="2">
    <location>
        <begin position="2302"/>
        <end position="2322"/>
    </location>
</feature>
<feature type="compositionally biased region" description="Basic residues" evidence="2">
    <location>
        <begin position="2323"/>
        <end position="2332"/>
    </location>
</feature>
<feature type="modified residue" description="Phosphothreonine" evidence="14">
    <location>
        <position position="1259"/>
    </location>
</feature>
<feature type="modified residue" description="Phosphothreonine" evidence="14">
    <location>
        <position position="1302"/>
    </location>
</feature>
<feature type="modified residue" description="Phosphothreonine" evidence="14">
    <location>
        <position position="1338"/>
    </location>
</feature>
<feature type="modified residue" description="Phosphothreonine" evidence="14">
    <location>
        <position position="1390"/>
    </location>
</feature>
<feature type="mutagenesis site" description="Retains binding to Mad1; when associated with A-1302; A-1338 and A-1390." evidence="14">
    <original>T</original>
    <variation>A</variation>
    <location>
        <position position="1259"/>
    </location>
</feature>
<feature type="mutagenesis site" description="Loss of binding to Mad1 and reduction of closed-Mad2 levels at unattached kinetochores; when associated with D-1302; D-1338 and D-1390 or with D-1338 and D-1390." evidence="14">
    <original>T</original>
    <variation>D</variation>
    <location>
        <position position="1259"/>
    </location>
</feature>
<feature type="mutagenesis site" description="Retains binding to Mad1; when associated with A-1259; A-1338 and A-1390." evidence="14">
    <original>T</original>
    <variation>A</variation>
    <location>
        <position position="1302"/>
    </location>
</feature>
<feature type="mutagenesis site" description="Loss of binding to Mad1 and reduction of closed-Mad2 levels at unattached kinetochores; when associated with D-1259; D-1338 and D-1390." evidence="14">
    <original>T</original>
    <variation>D</variation>
    <location>
        <position position="1302"/>
    </location>
</feature>
<feature type="mutagenesis site" description="Retains binding to Mad1; when associated with A-1259; A-1302 and A-1390." evidence="14">
    <original>T</original>
    <variation>A</variation>
    <location>
        <position position="1338"/>
    </location>
</feature>
<feature type="mutagenesis site" description="Loss of binding to Mad1 and reduction of closed-Mad2 levels at unattached kinetochores; when associated with D-1259; D-1302 and D-1390 or with D-1259 and D-1390." evidence="14">
    <original>T</original>
    <variation>D</variation>
    <location>
        <position position="1338"/>
    </location>
</feature>
<feature type="mutagenesis site" description="Retains binding to Mad1; when associated with A-1259; A-1302 and A-1338." evidence="14">
    <original>T</original>
    <variation>A</variation>
    <location>
        <position position="1390"/>
    </location>
</feature>
<feature type="mutagenesis site" description="Loss of binding to Mad1 and reduction of closed-Mad2 levels at unattached kinetochores; when associated with D-1259; D-1302 and D-1338 or with D-1259 and D-1338." evidence="14">
    <original>T</original>
    <variation>D</variation>
    <location>
        <position position="1390"/>
    </location>
</feature>
<feature type="sequence conflict" description="In Ref. 1; AAC47506." evidence="19" ref="1">
    <original>E</original>
    <variation>K</variation>
    <location>
        <position position="648"/>
    </location>
</feature>
<feature type="sequence conflict" description="In Ref. 1; AAC47506." evidence="19" ref="1">
    <original>E</original>
    <variation>G</variation>
    <location>
        <position position="704"/>
    </location>
</feature>
<feature type="sequence conflict" description="In Ref. 1; AAC47506." evidence="19" ref="1">
    <original>K</original>
    <variation>T</variation>
    <location>
        <position position="728"/>
    </location>
</feature>
<feature type="sequence conflict" description="In Ref. 1; AAC47506." evidence="19" ref="1">
    <original>P</original>
    <variation>H</variation>
    <location>
        <position position="925"/>
    </location>
</feature>
<feature type="sequence conflict" description="In Ref. 1; AAC47506." evidence="19" ref="1">
    <original>E</original>
    <variation>V</variation>
    <location>
        <position position="946"/>
    </location>
</feature>
<feature type="sequence conflict" description="In Ref. 1; AAC47506." evidence="19" ref="1">
    <original>A</original>
    <variation>S</variation>
    <location>
        <position position="987"/>
    </location>
</feature>
<feature type="sequence conflict" description="In Ref. 1; AAC47506." evidence="19" ref="1">
    <original>A</original>
    <variation>S</variation>
    <location>
        <position position="1142"/>
    </location>
</feature>
<feature type="sequence conflict" description="In Ref. 1; AAC47506." evidence="19" ref="1">
    <original>A</original>
    <variation>V</variation>
    <location>
        <position position="1596"/>
    </location>
</feature>
<feature type="sequence conflict" description="In Ref. 1; AAC47506." evidence="19" ref="1">
    <original>S</original>
    <variation>L</variation>
    <location>
        <position position="1889"/>
    </location>
</feature>
<feature type="sequence conflict" description="In Ref. 1; AAC47506." evidence="19" ref="1">
    <original>I</original>
    <variation>T</variation>
    <location>
        <position position="2058"/>
    </location>
</feature>
<feature type="sequence conflict" description="In Ref. 1; AAC47506." evidence="19" ref="1">
    <original>A</original>
    <variation>V</variation>
    <location>
        <position position="2146"/>
    </location>
</feature>
<dbReference type="EMBL" id="U91980">
    <property type="protein sequence ID" value="AAC47506.1"/>
    <property type="molecule type" value="mRNA"/>
</dbReference>
<dbReference type="EMBL" id="AE013599">
    <property type="protein sequence ID" value="AAF58615.1"/>
    <property type="molecule type" value="Genomic_DNA"/>
</dbReference>
<dbReference type="PIR" id="T13829">
    <property type="entry name" value="T13829"/>
</dbReference>
<dbReference type="RefSeq" id="NP_001260903.1">
    <property type="nucleotide sequence ID" value="NM_001273974.1"/>
</dbReference>
<dbReference type="RefSeq" id="NP_477067.2">
    <property type="nucleotide sequence ID" value="NM_057719.4"/>
</dbReference>
<dbReference type="SMR" id="A1Z8P9"/>
<dbReference type="BioGRID" id="62050">
    <property type="interactions" value="23"/>
</dbReference>
<dbReference type="ComplexPortal" id="CPX-2568">
    <property type="entry name" value="Nuclear pore complex"/>
</dbReference>
<dbReference type="FunCoup" id="A1Z8P9">
    <property type="interactions" value="2653"/>
</dbReference>
<dbReference type="IntAct" id="A1Z8P9">
    <property type="interactions" value="21"/>
</dbReference>
<dbReference type="MINT" id="A1Z8P9"/>
<dbReference type="STRING" id="7227.FBpp0304737"/>
<dbReference type="iPTMnet" id="A1Z8P9"/>
<dbReference type="PaxDb" id="7227-FBpp0304737"/>
<dbReference type="EnsemblMetazoa" id="FBtr0088033">
    <property type="protein sequence ID" value="FBpp0087140"/>
    <property type="gene ID" value="FBgn0013756"/>
</dbReference>
<dbReference type="EnsemblMetazoa" id="FBtr0332464">
    <property type="protein sequence ID" value="FBpp0304737"/>
    <property type="gene ID" value="FBgn0013756"/>
</dbReference>
<dbReference type="GeneID" id="36264"/>
<dbReference type="KEGG" id="dme:Dmel_CG8274"/>
<dbReference type="UCSC" id="CG8274-RA">
    <property type="organism name" value="d. melanogaster"/>
</dbReference>
<dbReference type="AGR" id="FB:FBgn0013756"/>
<dbReference type="CTD" id="36264"/>
<dbReference type="FlyBase" id="FBgn0013756">
    <property type="gene designation" value="Mgtor"/>
</dbReference>
<dbReference type="VEuPathDB" id="VectorBase:FBgn0013756"/>
<dbReference type="eggNOG" id="KOG4674">
    <property type="taxonomic scope" value="Eukaryota"/>
</dbReference>
<dbReference type="GeneTree" id="ENSGT00730000111014"/>
<dbReference type="HOGENOM" id="CLU_001130_0_0_1"/>
<dbReference type="InParanoid" id="A1Z8P9"/>
<dbReference type="OMA" id="HAQQNYE"/>
<dbReference type="OrthoDB" id="343070at2759"/>
<dbReference type="PhylomeDB" id="A1Z8P9"/>
<dbReference type="Reactome" id="R-DME-159227">
    <property type="pathway name" value="Transport of the SLBP independent Mature mRNA"/>
</dbReference>
<dbReference type="Reactome" id="R-DME-159230">
    <property type="pathway name" value="Transport of the SLBP Dependant Mature mRNA"/>
</dbReference>
<dbReference type="Reactome" id="R-DME-159231">
    <property type="pathway name" value="Transport of Mature mRNA Derived from an Intronless Transcript"/>
</dbReference>
<dbReference type="Reactome" id="R-DME-159236">
    <property type="pathway name" value="Transport of Mature mRNA derived from an Intron-Containing Transcript"/>
</dbReference>
<dbReference type="Reactome" id="R-DME-3108214">
    <property type="pathway name" value="SUMOylation of DNA damage response and repair proteins"/>
</dbReference>
<dbReference type="Reactome" id="R-DME-3301854">
    <property type="pathway name" value="Nuclear Pore Complex (NPC) Disassembly"/>
</dbReference>
<dbReference type="Reactome" id="R-DME-4085377">
    <property type="pathway name" value="SUMOylation of SUMOylation proteins"/>
</dbReference>
<dbReference type="Reactome" id="R-DME-4551638">
    <property type="pathway name" value="SUMOylation of chromatin organization proteins"/>
</dbReference>
<dbReference type="Reactome" id="R-DME-4615885">
    <property type="pathway name" value="SUMOylation of DNA replication proteins"/>
</dbReference>
<dbReference type="Reactome" id="R-DME-5578749">
    <property type="pathway name" value="Transcriptional regulation by small RNAs"/>
</dbReference>
<dbReference type="BioGRID-ORCS" id="36264">
    <property type="hits" value="1 hit in 1 CRISPR screen"/>
</dbReference>
<dbReference type="CD-CODE" id="2838EF58">
    <property type="entry name" value="Centrosome"/>
</dbReference>
<dbReference type="GenomeRNAi" id="36264"/>
<dbReference type="PRO" id="PR:A1Z8P9"/>
<dbReference type="Proteomes" id="UP000000803">
    <property type="component" value="Chromosome 2R"/>
</dbReference>
<dbReference type="Bgee" id="FBgn0013756">
    <property type="expression patterns" value="Expressed in spermatogonium in testis and 178 other cell types or tissues"/>
</dbReference>
<dbReference type="ExpressionAtlas" id="A1Z8P9">
    <property type="expression patterns" value="baseline and differential"/>
</dbReference>
<dbReference type="GO" id="GO:0000775">
    <property type="term" value="C:chromosome, centromeric region"/>
    <property type="evidence" value="ECO:0007669"/>
    <property type="project" value="UniProtKB-KW"/>
</dbReference>
<dbReference type="GO" id="GO:0005737">
    <property type="term" value="C:cytoplasm"/>
    <property type="evidence" value="ECO:0007669"/>
    <property type="project" value="UniProtKB-KW"/>
</dbReference>
<dbReference type="GO" id="GO:0000791">
    <property type="term" value="C:euchromatin"/>
    <property type="evidence" value="ECO:0000314"/>
    <property type="project" value="UniProtKB"/>
</dbReference>
<dbReference type="GO" id="GO:0070090">
    <property type="term" value="C:metaphase plate"/>
    <property type="evidence" value="ECO:0000314"/>
    <property type="project" value="UniProtKB"/>
</dbReference>
<dbReference type="GO" id="GO:0030496">
    <property type="term" value="C:midbody"/>
    <property type="evidence" value="ECO:0000314"/>
    <property type="project" value="UniProtKB"/>
</dbReference>
<dbReference type="GO" id="GO:0072686">
    <property type="term" value="C:mitotic spindle"/>
    <property type="evidence" value="ECO:0000314"/>
    <property type="project" value="UniProtKB"/>
</dbReference>
<dbReference type="GO" id="GO:0005635">
    <property type="term" value="C:nuclear envelope"/>
    <property type="evidence" value="ECO:0000314"/>
    <property type="project" value="UniProtKB"/>
</dbReference>
<dbReference type="GO" id="GO:0042405">
    <property type="term" value="C:nuclear inclusion body"/>
    <property type="evidence" value="ECO:0000314"/>
    <property type="project" value="UniProtKB"/>
</dbReference>
<dbReference type="GO" id="GO:0005652">
    <property type="term" value="C:nuclear lamina"/>
    <property type="evidence" value="ECO:0000314"/>
    <property type="project" value="UniProtKB"/>
</dbReference>
<dbReference type="GO" id="GO:0016363">
    <property type="term" value="C:nuclear matrix"/>
    <property type="evidence" value="ECO:0000314"/>
    <property type="project" value="UniProtKB"/>
</dbReference>
<dbReference type="GO" id="GO:0031965">
    <property type="term" value="C:nuclear membrane"/>
    <property type="evidence" value="ECO:0000314"/>
    <property type="project" value="UniProtKB"/>
</dbReference>
<dbReference type="GO" id="GO:0034399">
    <property type="term" value="C:nuclear periphery"/>
    <property type="evidence" value="ECO:0000314"/>
    <property type="project" value="UniProtKB"/>
</dbReference>
<dbReference type="GO" id="GO:0005643">
    <property type="term" value="C:nuclear pore"/>
    <property type="evidence" value="ECO:0000314"/>
    <property type="project" value="UniProtKB"/>
</dbReference>
<dbReference type="GO" id="GO:0005730">
    <property type="term" value="C:nucleolus"/>
    <property type="evidence" value="ECO:0000314"/>
    <property type="project" value="UniProtKB"/>
</dbReference>
<dbReference type="GO" id="GO:0005654">
    <property type="term" value="C:nucleoplasm"/>
    <property type="evidence" value="ECO:0007005"/>
    <property type="project" value="FlyBase"/>
</dbReference>
<dbReference type="GO" id="GO:0005634">
    <property type="term" value="C:nucleus"/>
    <property type="evidence" value="ECO:0000314"/>
    <property type="project" value="UniProtKB"/>
</dbReference>
<dbReference type="GO" id="GO:0005819">
    <property type="term" value="C:spindle"/>
    <property type="evidence" value="ECO:0000314"/>
    <property type="project" value="FlyBase"/>
</dbReference>
<dbReference type="GO" id="GO:1990047">
    <property type="term" value="C:spindle matrix"/>
    <property type="evidence" value="ECO:0000314"/>
    <property type="project" value="FlyBase"/>
</dbReference>
<dbReference type="GO" id="GO:0051233">
    <property type="term" value="C:spindle midzone"/>
    <property type="evidence" value="ECO:0000314"/>
    <property type="project" value="FlyBase"/>
</dbReference>
<dbReference type="GO" id="GO:0031490">
    <property type="term" value="F:chromatin DNA binding"/>
    <property type="evidence" value="ECO:0000314"/>
    <property type="project" value="UniProtKB"/>
</dbReference>
<dbReference type="GO" id="GO:0035035">
    <property type="term" value="F:histone acetyltransferase binding"/>
    <property type="evidence" value="ECO:0000353"/>
    <property type="project" value="UniProtKB"/>
</dbReference>
<dbReference type="GO" id="GO:0043021">
    <property type="term" value="F:ribonucleoprotein complex binding"/>
    <property type="evidence" value="ECO:0000250"/>
    <property type="project" value="FlyBase"/>
</dbReference>
<dbReference type="GO" id="GO:0017056">
    <property type="term" value="F:structural constituent of nuclear pore"/>
    <property type="evidence" value="ECO:0000318"/>
    <property type="project" value="GO_Central"/>
</dbReference>
<dbReference type="GO" id="GO:0006325">
    <property type="term" value="P:chromatin organization"/>
    <property type="evidence" value="ECO:0000315"/>
    <property type="project" value="FlyBase"/>
</dbReference>
<dbReference type="GO" id="GO:0006338">
    <property type="term" value="P:chromatin remodeling"/>
    <property type="evidence" value="ECO:0000315"/>
    <property type="project" value="UniProtKB"/>
</dbReference>
<dbReference type="GO" id="GO:0060250">
    <property type="term" value="P:germ-line stem-cell niche homeostasis"/>
    <property type="evidence" value="ECO:0000315"/>
    <property type="project" value="FlyBase"/>
</dbReference>
<dbReference type="GO" id="GO:0048133">
    <property type="term" value="P:male germ-line stem cell asymmetric division"/>
    <property type="evidence" value="ECO:0000315"/>
    <property type="project" value="FlyBase"/>
</dbReference>
<dbReference type="GO" id="GO:0007094">
    <property type="term" value="P:mitotic spindle assembly checkpoint signaling"/>
    <property type="evidence" value="ECO:0000315"/>
    <property type="project" value="FlyBase"/>
</dbReference>
<dbReference type="GO" id="GO:0000022">
    <property type="term" value="P:mitotic spindle elongation"/>
    <property type="evidence" value="ECO:0000315"/>
    <property type="project" value="FlyBase"/>
</dbReference>
<dbReference type="GO" id="GO:0006406">
    <property type="term" value="P:mRNA export from nucleus"/>
    <property type="evidence" value="ECO:0000318"/>
    <property type="project" value="GO_Central"/>
</dbReference>
<dbReference type="GO" id="GO:0000122">
    <property type="term" value="P:negative regulation of transcription by RNA polymerase II"/>
    <property type="evidence" value="ECO:0000315"/>
    <property type="project" value="UniProtKB"/>
</dbReference>
<dbReference type="GO" id="GO:0051781">
    <property type="term" value="P:positive regulation of cell division"/>
    <property type="evidence" value="ECO:0000315"/>
    <property type="project" value="UniProtKB"/>
</dbReference>
<dbReference type="GO" id="GO:0090316">
    <property type="term" value="P:positive regulation of intracellular protein transport"/>
    <property type="evidence" value="ECO:0000315"/>
    <property type="project" value="UniProtKB"/>
</dbReference>
<dbReference type="GO" id="GO:0090267">
    <property type="term" value="P:positive regulation of mitotic cell cycle spindle assembly checkpoint"/>
    <property type="evidence" value="ECO:0000315"/>
    <property type="project" value="UniProtKB"/>
</dbReference>
<dbReference type="GO" id="GO:0045840">
    <property type="term" value="P:positive regulation of mitotic nuclear division"/>
    <property type="evidence" value="ECO:0000315"/>
    <property type="project" value="UniProtKB"/>
</dbReference>
<dbReference type="GO" id="GO:0045944">
    <property type="term" value="P:positive regulation of transcription by RNA polymerase II"/>
    <property type="evidence" value="ECO:0000315"/>
    <property type="project" value="UniProtKB"/>
</dbReference>
<dbReference type="GO" id="GO:0006606">
    <property type="term" value="P:protein import into nucleus"/>
    <property type="evidence" value="ECO:0007669"/>
    <property type="project" value="InterPro"/>
</dbReference>
<dbReference type="GO" id="GO:0006355">
    <property type="term" value="P:regulation of DNA-templated transcription"/>
    <property type="evidence" value="ECO:0000315"/>
    <property type="project" value="UniProtKB"/>
</dbReference>
<dbReference type="GO" id="GO:0090235">
    <property type="term" value="P:regulation of metaphase plate congression"/>
    <property type="evidence" value="ECO:0000315"/>
    <property type="project" value="UniProtKB"/>
</dbReference>
<dbReference type="GO" id="GO:0007346">
    <property type="term" value="P:regulation of mitotic cell cycle"/>
    <property type="evidence" value="ECO:0000315"/>
    <property type="project" value="FlyBase"/>
</dbReference>
<dbReference type="GO" id="GO:0010965">
    <property type="term" value="P:regulation of mitotic sister chromatid separation"/>
    <property type="evidence" value="ECO:0000315"/>
    <property type="project" value="FlyBase"/>
</dbReference>
<dbReference type="GO" id="GO:1901673">
    <property type="term" value="P:regulation of mitotic spindle assembly"/>
    <property type="evidence" value="ECO:0000315"/>
    <property type="project" value="UniProtKB"/>
</dbReference>
<dbReference type="GO" id="GO:0060236">
    <property type="term" value="P:regulation of mitotic spindle organization"/>
    <property type="evidence" value="ECO:0000315"/>
    <property type="project" value="UniProtKB"/>
</dbReference>
<dbReference type="GO" id="GO:0034976">
    <property type="term" value="P:response to endoplasmic reticulum stress"/>
    <property type="evidence" value="ECO:0007001"/>
    <property type="project" value="FlyBase"/>
</dbReference>
<dbReference type="GO" id="GO:0009408">
    <property type="term" value="P:response to heat"/>
    <property type="evidence" value="ECO:0000314"/>
    <property type="project" value="UniProtKB"/>
</dbReference>
<dbReference type="GO" id="GO:0007549">
    <property type="term" value="P:sex-chromosome dosage compensation"/>
    <property type="evidence" value="ECO:0000315"/>
    <property type="project" value="UniProtKB"/>
</dbReference>
<dbReference type="GO" id="GO:0051225">
    <property type="term" value="P:spindle assembly"/>
    <property type="evidence" value="ECO:0000314"/>
    <property type="project" value="FlyBase"/>
</dbReference>
<dbReference type="InterPro" id="IPR012929">
    <property type="entry name" value="TPR/MLP1"/>
</dbReference>
<dbReference type="PANTHER" id="PTHR18898:SF2">
    <property type="entry name" value="NUCLEOPROTEIN TPR"/>
    <property type="match status" value="1"/>
</dbReference>
<dbReference type="PANTHER" id="PTHR18898">
    <property type="entry name" value="NUCLEOPROTEIN TPR-RELATED"/>
    <property type="match status" value="1"/>
</dbReference>
<dbReference type="Pfam" id="PF25481">
    <property type="entry name" value="Nucleoprot-TPR"/>
    <property type="match status" value="1"/>
</dbReference>
<dbReference type="Pfam" id="PF07926">
    <property type="entry name" value="TPR_MLP1_2"/>
    <property type="match status" value="1"/>
</dbReference>
<gene>
    <name evidence="20" type="primary">Mgtor</name>
    <name evidence="18 20" type="synonym">Bx34</name>
    <name evidence="20" type="synonym">l(2)k03905</name>
    <name evidence="20" type="synonym">Mtor</name>
    <name evidence="20" type="ORF">CG8274</name>
</gene>
<reference key="1">
    <citation type="journal article" date="1997" name="J. Cell Sci.">
        <title>A Drosophila Tpr protein homolog is localized both in the extrachromosomal channel network and to nuclear pore complexes.</title>
        <authorList>
            <person name="Zimowska G."/>
            <person name="Aris J.P."/>
            <person name="Paddy M.R."/>
        </authorList>
    </citation>
    <scope>NUCLEOTIDE SEQUENCE [MRNA]</scope>
    <scope>FUNCTION</scope>
    <scope>SUBUNIT</scope>
    <scope>SUBCELLULAR LOCATION</scope>
    <scope>TISSUE SPECIFICITY</scope>
    <scope>DEVELOPMENTAL STAGE</scope>
</reference>
<reference key="2">
    <citation type="journal article" date="2000" name="Science">
        <title>The genome sequence of Drosophila melanogaster.</title>
        <authorList>
            <person name="Adams M.D."/>
            <person name="Celniker S.E."/>
            <person name="Holt R.A."/>
            <person name="Evans C.A."/>
            <person name="Gocayne J.D."/>
            <person name="Amanatides P.G."/>
            <person name="Scherer S.E."/>
            <person name="Li P.W."/>
            <person name="Hoskins R.A."/>
            <person name="Galle R.F."/>
            <person name="George R.A."/>
            <person name="Lewis S.E."/>
            <person name="Richards S."/>
            <person name="Ashburner M."/>
            <person name="Henderson S.N."/>
            <person name="Sutton G.G."/>
            <person name="Wortman J.R."/>
            <person name="Yandell M.D."/>
            <person name="Zhang Q."/>
            <person name="Chen L.X."/>
            <person name="Brandon R.C."/>
            <person name="Rogers Y.-H.C."/>
            <person name="Blazej R.G."/>
            <person name="Champe M."/>
            <person name="Pfeiffer B.D."/>
            <person name="Wan K.H."/>
            <person name="Doyle C."/>
            <person name="Baxter E.G."/>
            <person name="Helt G."/>
            <person name="Nelson C.R."/>
            <person name="Miklos G.L.G."/>
            <person name="Abril J.F."/>
            <person name="Agbayani A."/>
            <person name="An H.-J."/>
            <person name="Andrews-Pfannkoch C."/>
            <person name="Baldwin D."/>
            <person name="Ballew R.M."/>
            <person name="Basu A."/>
            <person name="Baxendale J."/>
            <person name="Bayraktaroglu L."/>
            <person name="Beasley E.M."/>
            <person name="Beeson K.Y."/>
            <person name="Benos P.V."/>
            <person name="Berman B.P."/>
            <person name="Bhandari D."/>
            <person name="Bolshakov S."/>
            <person name="Borkova D."/>
            <person name="Botchan M.R."/>
            <person name="Bouck J."/>
            <person name="Brokstein P."/>
            <person name="Brottier P."/>
            <person name="Burtis K.C."/>
            <person name="Busam D.A."/>
            <person name="Butler H."/>
            <person name="Cadieu E."/>
            <person name="Center A."/>
            <person name="Chandra I."/>
            <person name="Cherry J.M."/>
            <person name="Cawley S."/>
            <person name="Dahlke C."/>
            <person name="Davenport L.B."/>
            <person name="Davies P."/>
            <person name="de Pablos B."/>
            <person name="Delcher A."/>
            <person name="Deng Z."/>
            <person name="Mays A.D."/>
            <person name="Dew I."/>
            <person name="Dietz S.M."/>
            <person name="Dodson K."/>
            <person name="Doup L.E."/>
            <person name="Downes M."/>
            <person name="Dugan-Rocha S."/>
            <person name="Dunkov B.C."/>
            <person name="Dunn P."/>
            <person name="Durbin K.J."/>
            <person name="Evangelista C.C."/>
            <person name="Ferraz C."/>
            <person name="Ferriera S."/>
            <person name="Fleischmann W."/>
            <person name="Fosler C."/>
            <person name="Gabrielian A.E."/>
            <person name="Garg N.S."/>
            <person name="Gelbart W.M."/>
            <person name="Glasser K."/>
            <person name="Glodek A."/>
            <person name="Gong F."/>
            <person name="Gorrell J.H."/>
            <person name="Gu Z."/>
            <person name="Guan P."/>
            <person name="Harris M."/>
            <person name="Harris N.L."/>
            <person name="Harvey D.A."/>
            <person name="Heiman T.J."/>
            <person name="Hernandez J.R."/>
            <person name="Houck J."/>
            <person name="Hostin D."/>
            <person name="Houston K.A."/>
            <person name="Howland T.J."/>
            <person name="Wei M.-H."/>
            <person name="Ibegwam C."/>
            <person name="Jalali M."/>
            <person name="Kalush F."/>
            <person name="Karpen G.H."/>
            <person name="Ke Z."/>
            <person name="Kennison J.A."/>
            <person name="Ketchum K.A."/>
            <person name="Kimmel B.E."/>
            <person name="Kodira C.D."/>
            <person name="Kraft C.L."/>
            <person name="Kravitz S."/>
            <person name="Kulp D."/>
            <person name="Lai Z."/>
            <person name="Lasko P."/>
            <person name="Lei Y."/>
            <person name="Levitsky A.A."/>
            <person name="Li J.H."/>
            <person name="Li Z."/>
            <person name="Liang Y."/>
            <person name="Lin X."/>
            <person name="Liu X."/>
            <person name="Mattei B."/>
            <person name="McIntosh T.C."/>
            <person name="McLeod M.P."/>
            <person name="McPherson D."/>
            <person name="Merkulov G."/>
            <person name="Milshina N.V."/>
            <person name="Mobarry C."/>
            <person name="Morris J."/>
            <person name="Moshrefi A."/>
            <person name="Mount S.M."/>
            <person name="Moy M."/>
            <person name="Murphy B."/>
            <person name="Murphy L."/>
            <person name="Muzny D.M."/>
            <person name="Nelson D.L."/>
            <person name="Nelson D.R."/>
            <person name="Nelson K.A."/>
            <person name="Nixon K."/>
            <person name="Nusskern D.R."/>
            <person name="Pacleb J.M."/>
            <person name="Palazzolo M."/>
            <person name="Pittman G.S."/>
            <person name="Pan S."/>
            <person name="Pollard J."/>
            <person name="Puri V."/>
            <person name="Reese M.G."/>
            <person name="Reinert K."/>
            <person name="Remington K."/>
            <person name="Saunders R.D.C."/>
            <person name="Scheeler F."/>
            <person name="Shen H."/>
            <person name="Shue B.C."/>
            <person name="Siden-Kiamos I."/>
            <person name="Simpson M."/>
            <person name="Skupski M.P."/>
            <person name="Smith T.J."/>
            <person name="Spier E."/>
            <person name="Spradling A.C."/>
            <person name="Stapleton M."/>
            <person name="Strong R."/>
            <person name="Sun E."/>
            <person name="Svirskas R."/>
            <person name="Tector C."/>
            <person name="Turner R."/>
            <person name="Venter E."/>
            <person name="Wang A.H."/>
            <person name="Wang X."/>
            <person name="Wang Z.-Y."/>
            <person name="Wassarman D.A."/>
            <person name="Weinstock G.M."/>
            <person name="Weissenbach J."/>
            <person name="Williams S.M."/>
            <person name="Woodage T."/>
            <person name="Worley K.C."/>
            <person name="Wu D."/>
            <person name="Yang S."/>
            <person name="Yao Q.A."/>
            <person name="Ye J."/>
            <person name="Yeh R.-F."/>
            <person name="Zaveri J.S."/>
            <person name="Zhan M."/>
            <person name="Zhang G."/>
            <person name="Zhao Q."/>
            <person name="Zheng L."/>
            <person name="Zheng X.H."/>
            <person name="Zhong F.N."/>
            <person name="Zhong W."/>
            <person name="Zhou X."/>
            <person name="Zhu S.C."/>
            <person name="Zhu X."/>
            <person name="Smith H.O."/>
            <person name="Gibbs R.A."/>
            <person name="Myers E.W."/>
            <person name="Rubin G.M."/>
            <person name="Venter J.C."/>
        </authorList>
    </citation>
    <scope>NUCLEOTIDE SEQUENCE [LARGE SCALE GENOMIC DNA]</scope>
    <source>
        <strain>Berkeley</strain>
    </source>
</reference>
<reference key="3">
    <citation type="journal article" date="2002" name="Genome Biol.">
        <title>Annotation of the Drosophila melanogaster euchromatic genome: a systematic review.</title>
        <authorList>
            <person name="Misra S."/>
            <person name="Crosby M.A."/>
            <person name="Mungall C.J."/>
            <person name="Matthews B.B."/>
            <person name="Campbell K.S."/>
            <person name="Hradecky P."/>
            <person name="Huang Y."/>
            <person name="Kaminker J.S."/>
            <person name="Millburn G.H."/>
            <person name="Prochnik S.E."/>
            <person name="Smith C.D."/>
            <person name="Tupy J.L."/>
            <person name="Whitfield E.J."/>
            <person name="Bayraktaroglu L."/>
            <person name="Berman B.P."/>
            <person name="Bettencourt B.R."/>
            <person name="Celniker S.E."/>
            <person name="de Grey A.D.N.J."/>
            <person name="Drysdale R.A."/>
            <person name="Harris N.L."/>
            <person name="Richter J."/>
            <person name="Russo S."/>
            <person name="Schroeder A.J."/>
            <person name="Shu S.Q."/>
            <person name="Stapleton M."/>
            <person name="Yamada C."/>
            <person name="Ashburner M."/>
            <person name="Gelbart W.M."/>
            <person name="Rubin G.M."/>
            <person name="Lewis S.E."/>
        </authorList>
    </citation>
    <scope>GENOME REANNOTATION</scope>
    <source>
        <strain>Berkeley</strain>
    </source>
</reference>
<reference key="4">
    <citation type="journal article" date="2002" name="Exp. Cell Res.">
        <title>Structures and dynamics of Drosophila Tpr inconsistent with a static, filamentous structure.</title>
        <authorList>
            <person name="Zimowska G."/>
            <person name="Paddy M.R."/>
        </authorList>
    </citation>
    <scope>FUNCTION</scope>
    <scope>SUBUNIT</scope>
    <scope>SUBCELLULAR LOCATION</scope>
</reference>
<reference key="5">
    <citation type="journal article" date="2004" name="Mol. Biol. Cell">
        <title>Megator, an essential coiled-coil protein that localizes to the putative spindle matrix during mitosis in Drosophila.</title>
        <authorList>
            <person name="Qi H."/>
            <person name="Rath U."/>
            <person name="Wang D."/>
            <person name="Xu Y.Z."/>
            <person name="Ding Y."/>
            <person name="Zhang W."/>
            <person name="Blacketer M.J."/>
            <person name="Paddy M.R."/>
            <person name="Girton J."/>
            <person name="Johansen J."/>
            <person name="Johansen K.M."/>
        </authorList>
    </citation>
    <scope>FUNCTION</scope>
    <scope>INTERACTION WITH CHRO</scope>
    <scope>SUBCELLULAR LOCATION</scope>
    <scope>DOMAIN</scope>
</reference>
<reference key="6">
    <citation type="journal article" date="2005" name="J. Cell. Biochem.">
        <title>EAST interacts with Megator and localizes to the putative spindle matrix during mitosis in Drosophila.</title>
        <authorList>
            <person name="Qi H."/>
            <person name="Rath U."/>
            <person name="Ding Y."/>
            <person name="Ji Y."/>
            <person name="Blacketer M.J."/>
            <person name="Girton J."/>
            <person name="Johansen J."/>
            <person name="Johansen K.M."/>
        </authorList>
    </citation>
    <scope>FUNCTION</scope>
    <scope>INTERACTION WITH EAST</scope>
    <scope>SUBCELLULAR LOCATION</scope>
</reference>
<reference key="7">
    <citation type="journal article" date="2006" name="Mol. Cell">
        <title>Nuclear pore components are involved in the transcriptional regulation of dosage compensation in Drosophila.</title>
        <authorList>
            <person name="Mendjan S."/>
            <person name="Taipale M."/>
            <person name="Kind J."/>
            <person name="Holz H."/>
            <person name="Gebhardt P."/>
            <person name="Schelder M."/>
            <person name="Vermeulen M."/>
            <person name="Buscaino A."/>
            <person name="Duncan K."/>
            <person name="Mueller J."/>
            <person name="Wilm M."/>
            <person name="Stunnenberg H.G."/>
            <person name="Saumweber H."/>
            <person name="Akhtar A."/>
        </authorList>
    </citation>
    <scope>FUNCTION</scope>
    <scope>ASSOCIATION WITH THE MSL COMPLEX</scope>
    <scope>SUBCELLULAR LOCATION</scope>
    <scope>DEVELOPMENTAL STAGE</scope>
    <scope>IDENTIFICATION BY MASS SPECTROMETRY</scope>
</reference>
<reference key="8">
    <citation type="journal article" date="2008" name="Mol. Biol. Cell">
        <title>In vivo dynamics of Drosophila nuclear envelope components.</title>
        <authorList>
            <person name="Katsani K.R."/>
            <person name="Karess R.E."/>
            <person name="Dostatni N."/>
            <person name="Doye V."/>
        </authorList>
    </citation>
    <scope>SUBCELLULAR LOCATION</scope>
</reference>
<reference key="9">
    <citation type="journal article" date="2009" name="Dev. Dyn.">
        <title>Asator, a tau-tubulin kinase homolog in Drosophila localizes to the mitotic spindle.</title>
        <authorList>
            <person name="Qi H."/>
            <person name="Yao C."/>
            <person name="Cai W."/>
            <person name="Girton J."/>
            <person name="Johansen K.M."/>
            <person name="Johansen J."/>
        </authorList>
    </citation>
    <scope>INTERACTION WITH ASATOR</scope>
</reference>
<reference key="10">
    <citation type="journal article" date="2009" name="J. Cell Biol.">
        <title>Spatiotemporal control of mitosis by the conserved spindle matrix protein Megator.</title>
        <authorList>
            <person name="Lince-Faria M."/>
            <person name="Maffini S."/>
            <person name="Orr B."/>
            <person name="Ding Y."/>
            <person name="Florindo C."/>
            <person name="Sunkel C.E."/>
            <person name="Tavares A."/>
            <person name="Johansen J."/>
            <person name="Johansen K.M."/>
            <person name="Maiato H."/>
        </authorList>
    </citation>
    <scope>FUNCTION</scope>
    <scope>INTERACTION WITH MAD2</scope>
    <scope>SUBCELLULAR LOCATION</scope>
</reference>
<reference key="11">
    <citation type="journal article" date="2010" name="PLoS Genet.">
        <title>Nuclear pore proteins nup153 and megator define transcriptionally active regions in the Drosophila genome.</title>
        <authorList>
            <person name="Vaquerizas J.M."/>
            <person name="Suyama R."/>
            <person name="Kind J."/>
            <person name="Miura K."/>
            <person name="Luscombe N.M."/>
            <person name="Akhtar A."/>
        </authorList>
    </citation>
    <scope>FUNCTION</scope>
    <scope>DNA-BINDING</scope>
    <scope>SUBCELLULAR LOCATION</scope>
</reference>
<reference key="12">
    <citation type="journal article" date="2012" name="Mol. Biol. Cell">
        <title>A nuclear-derived proteinaceous matrix embeds the microtubule spindle apparatus during mitosis.</title>
        <authorList>
            <person name="Yao C."/>
            <person name="Rath U."/>
            <person name="Maiato H."/>
            <person name="Sharp D."/>
            <person name="Girton J."/>
            <person name="Johansen K.M."/>
            <person name="Johansen J."/>
        </authorList>
    </citation>
    <scope>FUNCTION</scope>
    <scope>SUBUNIT</scope>
    <scope>SUBCELLULAR LOCATION</scope>
    <scope>DOMAIN</scope>
</reference>
<reference key="13">
    <citation type="journal article" date="2015" name="PLoS Genet.">
        <title>The Nuclear Matrix Protein Megator Regulates Stem Cell Asymmetric Division through the Mitotic Checkpoint Complex in Drosophila Testes.</title>
        <authorList>
            <person name="Liu Y."/>
            <person name="Singh S.R."/>
            <person name="Zeng X."/>
            <person name="Zhao J."/>
            <person name="Hou S.X."/>
        </authorList>
    </citation>
    <scope>FUNCTION</scope>
    <scope>DISRUPTION PHENOTYPE</scope>
</reference>
<reference key="14">
    <citation type="journal article" date="2017" name="Mol. Cell">
        <title>Metazoan nuclear pores provide a scaffold for poised genes and mediate induced enhancer-promoter contacts.</title>
        <authorList>
            <person name="Pascual-Garcia P."/>
            <person name="Debo B."/>
            <person name="Aleman J.R."/>
            <person name="Talamas J.A."/>
            <person name="Lan Y."/>
            <person name="Nguyen N.H."/>
            <person name="Won K.J."/>
            <person name="Capelson M."/>
        </authorList>
    </citation>
    <scope>INTERACTS WITH NUP98</scope>
</reference>
<reference key="15">
    <citation type="journal article" date="2020" name="J. Cell Biol.">
        <title>Mps1-mediated release of Mad1 from nuclear pores ensures the fidelity of chromosome segregation.</title>
        <authorList>
            <person name="Cunha-Silva S."/>
            <person name="Osswald M."/>
            <person name="Goemann J."/>
            <person name="Barbosa J."/>
            <person name="Santos L.M."/>
            <person name="Resende P."/>
            <person name="Bange T."/>
            <person name="Ferras C."/>
            <person name="Sunkel C.E."/>
            <person name="Conde C."/>
        </authorList>
    </citation>
    <scope>FUNCTION</scope>
    <scope>INTERACTION WITH MAD1</scope>
    <scope>SUBCELLULAR LOCATION</scope>
    <scope>PHOSPHORYLATION AT THR-1259; THR-1302; THR-1338 AND THR-1390</scope>
    <scope>MUTAGENESIS OF THR-1259; THR-1302; THR-1338 AND THR-1390</scope>
</reference>
<reference key="16">
    <citation type="journal article" date="2021" name="Cell Rep.">
        <title>Correct dosage of X chromosome transcription is controlled by a nuclear pore component.</title>
        <authorList>
            <person name="Aleman J.R."/>
            <person name="Kuhn T.M."/>
            <person name="Pascual-Garcia P."/>
            <person name="Gospocic J."/>
            <person name="Lan Y."/>
            <person name="Bonasio R."/>
            <person name="Little S.C."/>
            <person name="Capelson M."/>
        </authorList>
    </citation>
    <scope>FUNCTION</scope>
    <scope>INTERACTION WITH MOF</scope>
    <scope>DISRUPTION PHENOTYPE</scope>
</reference>
<sequence length="2346" mass="262353">MDLSGPQTLNNILQPDELKLVPEDVQKKLSEYINNFSDEYCKNRAAANRLAEAEQKKEELENKMEDYLVKFTSFELNVNELRTHLDQMSSERVNLMDTIAKGEQTISQLRKEKASVVEERDSMMKVIERQQAELERLKQDLHTYQQQLSSAIAAKCEAIARVDEIQSKEVALELKENRMESERDMLHKEILLISGDLNKSNAELQNIRREHTINTMQLQSCLKEKTESLKLMQEQYEQAVKTIGELTSKIEMQNDTAFKQNQATEEYVGKLKKELDAKEKLFEIFKSTESDHLIQREELLQGISEIKRLLEEAEEQCAQLTEQMETMKQKHSAELDEQNKKIQAMEQELASANDLLKQARESNLESAICQLAPSAAVASRLIRSDLSLTELYSMYAKSSEELEMRNCEIEQLKLQLKSIIAEISESAPILEKQNSDYQKMKETNSELLREHDELLQNKLCLERELERALSTLNHNQNENKKLKQTHTDLSRQVCMLLDELNCIRAGVKHVRIQPTRQLPTSESLISDNLVTFSSIEELVDRNTYLLNMSRELTELLEASEKNQDKMLLEQSKNHIRKLDARFAELEDLLTQKNNTVTTLLSKCDRYKKLYFAAQKKLGQNTVDLDDSNLEPNDSALDTSEQPAANFEESRKLEKRVRQLEQQLEGEVKKYASLKENYDYYTSEKRKNDALAQEQFDSMRKEVRELTSSNCKLMNTTEFQKEQIELLHKNIGTYKQQVTTLEERTKNYEKTIIKHEQTVHLLKDEMMAAHRKHAAADAEAQSLRQENRILRDTSSRLQIEKETYHREQQSQSLLLNSLEFIKTNLERSEMEGRQRLEQRLDDTVRELAAQRRHFQEEEEKFRESINEFKRQAETAIKLKDEEKQLADKWQAELTSVREELAEKVNKVNELSKKLQEVLTPTLNDNPITAANKRAREFELKLDQATVEIESLTKELAKTREHGEQFYKMSQSAESEIKRLHELHGELVAKQEEEIKKLRSSEAELKTRISDLEAEAMLSNVTEQSKTVNQSGQLKSAQDDLKSLLEKLTEANCTIRTLRSENTSLVESLNAAEVKYANGMIQHSADIQELTRYKAEFFKANDELNQLKSGRESLQAAYDELLRSNAEAQKLLDKEREESEKRVADLHALNSNLHDQIEALASKLAVLASQSQNPNSSLNESAMDGDQSLNASGLTAAEEGRNNEQLLKIIKFLRKEKDLFAAKLDILKAENARLISEHAIQQKKVDELNGYLNQERAKSQTDVVSANKHEEVLRKIETLNAITDSNRILREERNALTLRVAELTDRISSVEKELFPLQCSNKELTSKIEEINVENTSLRTEAIKWRQRANALVEKSNRNPEEFKRLQAEREHLAKLLTAEKELNKKQSDELTVLKQRMNTEIPMLNKQMQILDEARKKQVDEFTNLKQNNTRQTQDIMELKNRLLQKEEELLKANEELETKDKTIADKETKELQLRKLAKRYKDFYIGLQSQGGGTESAAELEKVRSELEEVNNQLRALKDEHEKITKECDEVKKRTEPETDTSAIRQEYKAKLDKLVVDLTVARTDLVNQETTFAGTKSSYDETIARLEKELQENIAANKDINQRLTRENESLHMRINQLTRQLGSQQSTKPSTSSVAEKGNISESSPRTANVKPMSGSATVQQSATVTPWRGGETPLASIRPISVQNSRTAAILPTSQQPPAGSSTSTSSSSSSSSTSTTSAAGGGSSAVAQTALVPPQQQVHTTGSAALESMASSSPTSSHTDYMPSTSSASVAVAAIPPMGASSAAESSQEAESIQHPQQNDSQLFVGGAQQQVVALVSPRVEGSSSSSSSTSVPTATAPSIQDGGSQSQQPSTSGSSSSSSTVVSSHSRHTPSSSNVTTTQAGCSSQGIKRPRDIEGDSSTGTEEGVAEKMSKITKRLRGPMHSGELSAGHIGDSGMDVDQMPTSSQRDQEDDIQVVDSDDEEDVLADADDGPIDGGEAEQEGYEDSYEQDNEMDDNEGGDDDNDIAVDAQDNNEVDIEVPEQHMQAQEESQSLDNQAIATASASTQENNQSQAITSGSGESSNPVTLPQAEASNWKQAAASTSTAAARRNESSVEIVSSPQVSNFCEQPARLESAEVDGTAEVAGGAPHESAGPSDTGAASASSPQKQSEAGESSGSDALKAADDGGDHADGTDNAREADEAFAEETMATGQGEDSQPLGNDNPNVGTSQSEVSHNQANLGEGNPTEDSEGADGVSSEGEKQAVGVEEEGREAEATSPSENTRFRTLRSAVPTRRGHRAMRGGSPNSQNRPQRIVWQRDTSPGNIQQNQMSANNNRFAQRTRNRRPIRRPPPNNFNNGGRFP</sequence>